<gene>
    <name type="primary">aspS</name>
    <name type="ordered locus">APE_2192.1</name>
</gene>
<comment type="function">
    <text evidence="1">Aspartyl-tRNA synthetase with relaxed tRNA specificity since it is able to aspartylate not only its cognate tRNA(Asp) but also tRNA(Asn). Reaction proceeds in two steps: L-aspartate is first activated by ATP to form Asp-AMP and then transferred to the acceptor end of tRNA(Asp/Asn) (By similarity).</text>
</comment>
<comment type="catalytic activity">
    <reaction>
        <text>tRNA(Asx) + L-aspartate + ATP = L-aspartyl-tRNA(Asx) + AMP + diphosphate</text>
        <dbReference type="Rhea" id="RHEA:18349"/>
        <dbReference type="Rhea" id="RHEA-COMP:9710"/>
        <dbReference type="Rhea" id="RHEA-COMP:9711"/>
        <dbReference type="ChEBI" id="CHEBI:29991"/>
        <dbReference type="ChEBI" id="CHEBI:30616"/>
        <dbReference type="ChEBI" id="CHEBI:33019"/>
        <dbReference type="ChEBI" id="CHEBI:78442"/>
        <dbReference type="ChEBI" id="CHEBI:78516"/>
        <dbReference type="ChEBI" id="CHEBI:456215"/>
        <dbReference type="EC" id="6.1.1.23"/>
    </reaction>
</comment>
<comment type="cofactor">
    <cofactor evidence="1">
        <name>Mg(2+)</name>
        <dbReference type="ChEBI" id="CHEBI:18420"/>
    </cofactor>
    <text evidence="1">Binds 3 Mg(2+) cations per subunit. The strongest magnesium site (Mg1) is bound to the beta- and gamma-phosphates of ATP and four water molecules complete its coordination sphere.</text>
</comment>
<comment type="subunit">
    <text evidence="1">Homodimer.</text>
</comment>
<comment type="subcellular location">
    <subcellularLocation>
        <location evidence="1">Cytoplasm</location>
    </subcellularLocation>
</comment>
<comment type="similarity">
    <text evidence="2">Belongs to the class-II aminoacyl-tRNA synthetase family. Type 2 subfamily.</text>
</comment>
<proteinExistence type="inferred from homology"/>
<sequence length="442" mass="50853">MLKDRFIADIIASKESLVGGRVRVCGWAYRIRDLGRLKFILVRDRSGVIQATVKRGESPEDALRAAEDLKLESVVCVEGELRQAPTREGVEVKVERLEVLSTPVEPLPLEVEGSEKASLPTRLKYRWLDIRNPMVSAIFELEAMVAKVFRDYYWSQGFVEIFTPKIVAAGTESGAEVFPVVYFDKTAFLAQSPQFYKQFAVIAGLERVFEIGPVFRAEPHHTSRHLNEYHSLDIEVGFIESYNDVMNYVEGFMRAIVRMLEEDGRRVLELYGVELPRIPASGIPKIPLRKAYEILEEKYGKKVEYGEDLDSEGERLMGAYAGEELDSDFVFIVEYPWKVRPFYTMRKDDEPSWTYSFDLLYRGLEIVTGGQREHRYHRLLENLRDKGLDAESFQFYLDFFKHGAPPHGGAGMGLERIVMQTLKLENIREARMLPRDTERITP</sequence>
<reference key="1">
    <citation type="journal article" date="1999" name="DNA Res.">
        <title>Complete genome sequence of an aerobic hyper-thermophilic crenarchaeon, Aeropyrum pernix K1.</title>
        <authorList>
            <person name="Kawarabayasi Y."/>
            <person name="Hino Y."/>
            <person name="Horikawa H."/>
            <person name="Yamazaki S."/>
            <person name="Haikawa Y."/>
            <person name="Jin-no K."/>
            <person name="Takahashi M."/>
            <person name="Sekine M."/>
            <person name="Baba S."/>
            <person name="Ankai A."/>
            <person name="Kosugi H."/>
            <person name="Hosoyama A."/>
            <person name="Fukui S."/>
            <person name="Nagai Y."/>
            <person name="Nishijima K."/>
            <person name="Nakazawa H."/>
            <person name="Takamiya M."/>
            <person name="Masuda S."/>
            <person name="Funahashi T."/>
            <person name="Tanaka T."/>
            <person name="Kudoh Y."/>
            <person name="Yamazaki J."/>
            <person name="Kushida N."/>
            <person name="Oguchi A."/>
            <person name="Aoki K."/>
            <person name="Kubota K."/>
            <person name="Nakamura Y."/>
            <person name="Nomura N."/>
            <person name="Sako Y."/>
            <person name="Kikuchi H."/>
        </authorList>
    </citation>
    <scope>NUCLEOTIDE SEQUENCE [LARGE SCALE GENOMIC DNA]</scope>
    <source>
        <strain>ATCC 700893 / DSM 11879 / JCM 9820 / NBRC 100138 / K1</strain>
    </source>
</reference>
<name>SYDND_AERPE</name>
<accession>Q9Y9U7</accession>
<protein>
    <recommendedName>
        <fullName>Aspartate--tRNA(Asp/Asn) ligase</fullName>
        <ecNumber>6.1.1.23</ecNumber>
    </recommendedName>
    <alternativeName>
        <fullName>Aspartyl-tRNA synthetase</fullName>
        <shortName>AspRS</shortName>
    </alternativeName>
    <alternativeName>
        <fullName>Non-discriminating aspartyl-tRNA synthetase</fullName>
        <shortName>ND-AspRS</shortName>
    </alternativeName>
</protein>
<feature type="chain" id="PRO_0000110989" description="Aspartate--tRNA(Asp/Asn) ligase">
    <location>
        <begin position="1"/>
        <end position="442"/>
    </location>
</feature>
<feature type="region of interest" description="Aspartate" evidence="1">
    <location>
        <begin position="194"/>
        <end position="197"/>
    </location>
</feature>
<feature type="binding site" evidence="1">
    <location>
        <position position="172"/>
    </location>
    <ligand>
        <name>L-aspartate</name>
        <dbReference type="ChEBI" id="CHEBI:29991"/>
    </ligand>
</feature>
<feature type="binding site" evidence="1">
    <location>
        <begin position="216"/>
        <end position="218"/>
    </location>
    <ligand>
        <name>ATP</name>
        <dbReference type="ChEBI" id="CHEBI:30616"/>
    </ligand>
</feature>
<feature type="binding site" evidence="1">
    <location>
        <position position="216"/>
    </location>
    <ligand>
        <name>L-aspartate</name>
        <dbReference type="ChEBI" id="CHEBI:29991"/>
    </ligand>
</feature>
<feature type="binding site" evidence="1">
    <location>
        <begin position="224"/>
        <end position="226"/>
    </location>
    <ligand>
        <name>ATP</name>
        <dbReference type="ChEBI" id="CHEBI:30616"/>
    </ligand>
</feature>
<feature type="binding site" evidence="1">
    <location>
        <position position="365"/>
    </location>
    <ligand>
        <name>ATP</name>
        <dbReference type="ChEBI" id="CHEBI:30616"/>
    </ligand>
</feature>
<feature type="binding site" evidence="1">
    <location>
        <position position="365"/>
    </location>
    <ligand>
        <name>Mg(2+)</name>
        <dbReference type="ChEBI" id="CHEBI:18420"/>
        <label>2</label>
    </ligand>
</feature>
<feature type="binding site" evidence="1">
    <location>
        <position position="365"/>
    </location>
    <ligand>
        <name>Mg(2+)</name>
        <dbReference type="ChEBI" id="CHEBI:18420"/>
        <label>3</label>
    </ligand>
</feature>
<feature type="binding site" evidence="1">
    <location>
        <position position="368"/>
    </location>
    <ligand>
        <name>L-aspartate</name>
        <dbReference type="ChEBI" id="CHEBI:29991"/>
    </ligand>
</feature>
<feature type="binding site" evidence="1">
    <location>
        <position position="368"/>
    </location>
    <ligand>
        <name>Mg(2+)</name>
        <dbReference type="ChEBI" id="CHEBI:18420"/>
        <label>2</label>
    </ligand>
</feature>
<feature type="binding site" evidence="1">
    <location>
        <position position="372"/>
    </location>
    <ligand>
        <name>L-aspartate</name>
        <dbReference type="ChEBI" id="CHEBI:29991"/>
    </ligand>
</feature>
<feature type="binding site" evidence="1">
    <location>
        <begin position="413"/>
        <end position="416"/>
    </location>
    <ligand>
        <name>ATP</name>
        <dbReference type="ChEBI" id="CHEBI:30616"/>
    </ligand>
</feature>
<feature type="site" description="Important for tRNA non-discrimination" evidence="1">
    <location>
        <position position="85"/>
    </location>
</feature>
<evidence type="ECO:0000250" key="1"/>
<evidence type="ECO:0000305" key="2"/>
<keyword id="KW-0030">Aminoacyl-tRNA synthetase</keyword>
<keyword id="KW-0067">ATP-binding</keyword>
<keyword id="KW-0963">Cytoplasm</keyword>
<keyword id="KW-0436">Ligase</keyword>
<keyword id="KW-0460">Magnesium</keyword>
<keyword id="KW-0479">Metal-binding</keyword>
<keyword id="KW-0547">Nucleotide-binding</keyword>
<keyword id="KW-0648">Protein biosynthesis</keyword>
<keyword id="KW-1185">Reference proteome</keyword>
<organism>
    <name type="scientific">Aeropyrum pernix (strain ATCC 700893 / DSM 11879 / JCM 9820 / NBRC 100138 / K1)</name>
    <dbReference type="NCBI Taxonomy" id="272557"/>
    <lineage>
        <taxon>Archaea</taxon>
        <taxon>Thermoproteota</taxon>
        <taxon>Thermoprotei</taxon>
        <taxon>Desulfurococcales</taxon>
        <taxon>Desulfurococcaceae</taxon>
        <taxon>Aeropyrum</taxon>
    </lineage>
</organism>
<dbReference type="EC" id="6.1.1.23"/>
<dbReference type="EMBL" id="BA000002">
    <property type="protein sequence ID" value="BAA81203.2"/>
    <property type="molecule type" value="Genomic_DNA"/>
</dbReference>
<dbReference type="PIR" id="C72527">
    <property type="entry name" value="C72527"/>
</dbReference>
<dbReference type="RefSeq" id="WP_010866856.1">
    <property type="nucleotide sequence ID" value="NC_000854.2"/>
</dbReference>
<dbReference type="SMR" id="Q9Y9U7"/>
<dbReference type="STRING" id="272557.APE_2192.1"/>
<dbReference type="EnsemblBacteria" id="BAA81203">
    <property type="protein sequence ID" value="BAA81203"/>
    <property type="gene ID" value="APE_2192.1"/>
</dbReference>
<dbReference type="GeneID" id="1445256"/>
<dbReference type="KEGG" id="ape:APE_2192.1"/>
<dbReference type="PATRIC" id="fig|272557.25.peg.1465"/>
<dbReference type="eggNOG" id="arCOG00406">
    <property type="taxonomic scope" value="Archaea"/>
</dbReference>
<dbReference type="Proteomes" id="UP000002518">
    <property type="component" value="Chromosome"/>
</dbReference>
<dbReference type="GO" id="GO:0017101">
    <property type="term" value="C:aminoacyl-tRNA synthetase multienzyme complex"/>
    <property type="evidence" value="ECO:0007669"/>
    <property type="project" value="TreeGrafter"/>
</dbReference>
<dbReference type="GO" id="GO:0005829">
    <property type="term" value="C:cytosol"/>
    <property type="evidence" value="ECO:0007669"/>
    <property type="project" value="TreeGrafter"/>
</dbReference>
<dbReference type="GO" id="GO:0004815">
    <property type="term" value="F:aspartate-tRNA ligase activity"/>
    <property type="evidence" value="ECO:0007669"/>
    <property type="project" value="UniProtKB-UniRule"/>
</dbReference>
<dbReference type="GO" id="GO:0050560">
    <property type="term" value="F:aspartate-tRNA(Asn) ligase activity"/>
    <property type="evidence" value="ECO:0007669"/>
    <property type="project" value="UniProtKB-EC"/>
</dbReference>
<dbReference type="GO" id="GO:0005524">
    <property type="term" value="F:ATP binding"/>
    <property type="evidence" value="ECO:0007669"/>
    <property type="project" value="UniProtKB-UniRule"/>
</dbReference>
<dbReference type="GO" id="GO:0000287">
    <property type="term" value="F:magnesium ion binding"/>
    <property type="evidence" value="ECO:0007669"/>
    <property type="project" value="UniProtKB-UniRule"/>
</dbReference>
<dbReference type="GO" id="GO:0003723">
    <property type="term" value="F:RNA binding"/>
    <property type="evidence" value="ECO:0007669"/>
    <property type="project" value="TreeGrafter"/>
</dbReference>
<dbReference type="GO" id="GO:0006422">
    <property type="term" value="P:aspartyl-tRNA aminoacylation"/>
    <property type="evidence" value="ECO:0007669"/>
    <property type="project" value="UniProtKB-UniRule"/>
</dbReference>
<dbReference type="CDD" id="cd00776">
    <property type="entry name" value="AsxRS_core"/>
    <property type="match status" value="1"/>
</dbReference>
<dbReference type="FunFam" id="3.30.930.10:FF:000038">
    <property type="entry name" value="Aspartate--tRNA ligase"/>
    <property type="match status" value="1"/>
</dbReference>
<dbReference type="Gene3D" id="3.30.930.10">
    <property type="entry name" value="Bira Bifunctional Protein, Domain 2"/>
    <property type="match status" value="1"/>
</dbReference>
<dbReference type="Gene3D" id="2.40.50.140">
    <property type="entry name" value="Nucleic acid-binding proteins"/>
    <property type="match status" value="1"/>
</dbReference>
<dbReference type="HAMAP" id="MF_02075">
    <property type="entry name" value="Asp_tRNA_synth_type2"/>
    <property type="match status" value="1"/>
</dbReference>
<dbReference type="InterPro" id="IPR004364">
    <property type="entry name" value="Aa-tRNA-synt_II"/>
</dbReference>
<dbReference type="InterPro" id="IPR006195">
    <property type="entry name" value="aa-tRNA-synth_II"/>
</dbReference>
<dbReference type="InterPro" id="IPR045864">
    <property type="entry name" value="aa-tRNA-synth_II/BPL/LPL"/>
</dbReference>
<dbReference type="InterPro" id="IPR004523">
    <property type="entry name" value="Asp-tRNA_synthase_2"/>
</dbReference>
<dbReference type="InterPro" id="IPR002312">
    <property type="entry name" value="Asp/Asn-tRNA-synth_IIb"/>
</dbReference>
<dbReference type="InterPro" id="IPR012340">
    <property type="entry name" value="NA-bd_OB-fold"/>
</dbReference>
<dbReference type="InterPro" id="IPR004365">
    <property type="entry name" value="NA-bd_OB_tRNA"/>
</dbReference>
<dbReference type="NCBIfam" id="TIGR00458">
    <property type="entry name" value="aspS_nondisc"/>
    <property type="match status" value="1"/>
</dbReference>
<dbReference type="NCBIfam" id="NF003483">
    <property type="entry name" value="PRK05159.1"/>
    <property type="match status" value="1"/>
</dbReference>
<dbReference type="PANTHER" id="PTHR43450:SF1">
    <property type="entry name" value="ASPARTATE--TRNA LIGASE, CYTOPLASMIC"/>
    <property type="match status" value="1"/>
</dbReference>
<dbReference type="PANTHER" id="PTHR43450">
    <property type="entry name" value="ASPARTYL-TRNA SYNTHETASE"/>
    <property type="match status" value="1"/>
</dbReference>
<dbReference type="Pfam" id="PF00152">
    <property type="entry name" value="tRNA-synt_2"/>
    <property type="match status" value="1"/>
</dbReference>
<dbReference type="Pfam" id="PF01336">
    <property type="entry name" value="tRNA_anti-codon"/>
    <property type="match status" value="1"/>
</dbReference>
<dbReference type="PRINTS" id="PR01042">
    <property type="entry name" value="TRNASYNTHASP"/>
</dbReference>
<dbReference type="SUPFAM" id="SSF55681">
    <property type="entry name" value="Class II aaRS and biotin synthetases"/>
    <property type="match status" value="1"/>
</dbReference>
<dbReference type="SUPFAM" id="SSF50249">
    <property type="entry name" value="Nucleic acid-binding proteins"/>
    <property type="match status" value="1"/>
</dbReference>
<dbReference type="PROSITE" id="PS50862">
    <property type="entry name" value="AA_TRNA_LIGASE_II"/>
    <property type="match status" value="1"/>
</dbReference>